<accession>Q85AI6</accession>
<gene>
    <name type="primary">rps7-A</name>
</gene>
<gene>
    <name type="primary">rps7-B</name>
</gene>
<organism>
    <name type="scientific">Adiantum capillus-veneris</name>
    <name type="common">Maidenhair fern</name>
    <dbReference type="NCBI Taxonomy" id="13818"/>
    <lineage>
        <taxon>Eukaryota</taxon>
        <taxon>Viridiplantae</taxon>
        <taxon>Streptophyta</taxon>
        <taxon>Embryophyta</taxon>
        <taxon>Tracheophyta</taxon>
        <taxon>Polypodiopsida</taxon>
        <taxon>Polypodiidae</taxon>
        <taxon>Polypodiales</taxon>
        <taxon>Pteridineae</taxon>
        <taxon>Pteridaceae</taxon>
        <taxon>Vittarioideae</taxon>
        <taxon>Adiantum</taxon>
    </lineage>
</organism>
<protein>
    <recommendedName>
        <fullName evidence="2">Small ribosomal subunit protein uS7cz/uS7cy</fullName>
    </recommendedName>
    <alternativeName>
        <fullName>30S ribosomal protein S7, chloroplastic</fullName>
    </alternativeName>
</protein>
<comment type="function">
    <text evidence="1">One of the primary rRNA binding proteins, it binds directly to 16S rRNA where it nucleates assembly of the head domain of the 30S subunit.</text>
</comment>
<comment type="subunit">
    <text>Part of the 30S ribosomal subunit.</text>
</comment>
<comment type="subcellular location">
    <subcellularLocation>
        <location>Plastid</location>
        <location>Chloroplast</location>
    </subcellularLocation>
</comment>
<comment type="RNA editing">
    <location>
        <position position="1" evidence="3"/>
    </location>
    <location>
        <position position="47" evidence="3"/>
    </location>
    <location>
        <position position="99" evidence="3"/>
    </location>
    <location>
        <position position="115" evidence="3"/>
    </location>
    <text>The initiator methionine is created by RNA editing. The nonsense codon at position 47 is edited to a sense codon.</text>
</comment>
<comment type="similarity">
    <text evidence="4">Belongs to the universal ribosomal protein uS7 family.</text>
</comment>
<proteinExistence type="evidence at transcript level"/>
<keyword id="KW-0150">Chloroplast</keyword>
<keyword id="KW-0934">Plastid</keyword>
<keyword id="KW-0687">Ribonucleoprotein</keyword>
<keyword id="KW-0689">Ribosomal protein</keyword>
<keyword id="KW-0691">RNA editing</keyword>
<keyword id="KW-0694">RNA-binding</keyword>
<keyword id="KW-0699">rRNA-binding</keyword>
<reference key="1">
    <citation type="journal article" date="2003" name="DNA Res.">
        <title>Complete nucleotide sequence of the chloroplast genome from a leptosporangiate fern, Adiantum capillus-veneris L.</title>
        <authorList>
            <person name="Wolf P.G."/>
            <person name="Rowe C.A."/>
            <person name="Sinclair R.B."/>
            <person name="Hasebe M."/>
        </authorList>
    </citation>
    <scope>NUCLEOTIDE SEQUENCE [LARGE SCALE GENOMIC DNA]</scope>
</reference>
<reference key="2">
    <citation type="journal article" date="2004" name="Gene">
        <title>High levels of RNA editing in a vascular plant chloroplast genome: analysis of transcripts from the fern Adiantum capillus-veneris.</title>
        <authorList>
            <person name="Wolf P.G."/>
            <person name="Rowe C.A."/>
            <person name="Hasebe M."/>
        </authorList>
    </citation>
    <scope>NUCLEOTIDE SEQUENCE [GENOMIC DNA]</scope>
    <scope>RNA EDITING</scope>
    <source>
        <tissue>Frond</tissue>
    </source>
</reference>
<reference key="3">
    <citation type="submission" date="2004-06" db="EMBL/GenBank/DDBJ databases">
        <authorList>
            <person name="Wolf P.G."/>
            <person name="Rowe C.A."/>
            <person name="Sinclair R.B."/>
            <person name="Hasebe M."/>
        </authorList>
    </citation>
    <scope>SEQUENCE REVISION TO N-TERMINUS</scope>
</reference>
<evidence type="ECO:0000250" key="1"/>
<evidence type="ECO:0000255" key="2">
    <source>
        <dbReference type="HAMAP-Rule" id="MF_00480"/>
    </source>
</evidence>
<evidence type="ECO:0000269" key="3">
    <source>
    </source>
</evidence>
<evidence type="ECO:0000305" key="4"/>
<sequence>MNEIRNIESDPIYRNRLANMLVDRILKNGKKSLAYQIFYQAMKRIRQKTNRNPLSVLRQAVRGVTPDVVTETKRVGGSTYRVPIEVVPAKGKALAIRWLLIACRKRSGRSMALRLSDELIDAARNSGSAIRKKEETHKVAEANKAFAHFR</sequence>
<name>RR7_ADICA</name>
<dbReference type="EMBL" id="AY178864">
    <property type="protein sequence ID" value="AAP29434.2"/>
    <property type="status" value="ALT_SEQ"/>
    <property type="molecule type" value="Genomic_DNA"/>
</dbReference>
<dbReference type="EMBL" id="AY178864">
    <property type="protein sequence ID" value="AAP29452.3"/>
    <property type="molecule type" value="Genomic_DNA"/>
</dbReference>
<dbReference type="SMR" id="Q85AI6"/>
<dbReference type="GO" id="GO:0009507">
    <property type="term" value="C:chloroplast"/>
    <property type="evidence" value="ECO:0007669"/>
    <property type="project" value="UniProtKB-SubCell"/>
</dbReference>
<dbReference type="GO" id="GO:0015935">
    <property type="term" value="C:small ribosomal subunit"/>
    <property type="evidence" value="ECO:0007669"/>
    <property type="project" value="InterPro"/>
</dbReference>
<dbReference type="GO" id="GO:0019843">
    <property type="term" value="F:rRNA binding"/>
    <property type="evidence" value="ECO:0007669"/>
    <property type="project" value="UniProtKB-UniRule"/>
</dbReference>
<dbReference type="GO" id="GO:0003735">
    <property type="term" value="F:structural constituent of ribosome"/>
    <property type="evidence" value="ECO:0007669"/>
    <property type="project" value="InterPro"/>
</dbReference>
<dbReference type="GO" id="GO:0006412">
    <property type="term" value="P:translation"/>
    <property type="evidence" value="ECO:0007669"/>
    <property type="project" value="UniProtKB-UniRule"/>
</dbReference>
<dbReference type="CDD" id="cd14871">
    <property type="entry name" value="uS7_Chloroplast"/>
    <property type="match status" value="1"/>
</dbReference>
<dbReference type="FunFam" id="1.10.455.10:FF:000001">
    <property type="entry name" value="30S ribosomal protein S7"/>
    <property type="match status" value="1"/>
</dbReference>
<dbReference type="Gene3D" id="1.10.455.10">
    <property type="entry name" value="Ribosomal protein S7 domain"/>
    <property type="match status" value="1"/>
</dbReference>
<dbReference type="HAMAP" id="MF_00480_B">
    <property type="entry name" value="Ribosomal_uS7_B"/>
    <property type="match status" value="1"/>
</dbReference>
<dbReference type="InterPro" id="IPR000235">
    <property type="entry name" value="Ribosomal_uS7"/>
</dbReference>
<dbReference type="InterPro" id="IPR005717">
    <property type="entry name" value="Ribosomal_uS7_bac/org-type"/>
</dbReference>
<dbReference type="InterPro" id="IPR020606">
    <property type="entry name" value="Ribosomal_uS7_CS"/>
</dbReference>
<dbReference type="InterPro" id="IPR023798">
    <property type="entry name" value="Ribosomal_uS7_dom"/>
</dbReference>
<dbReference type="InterPro" id="IPR036823">
    <property type="entry name" value="Ribosomal_uS7_dom_sf"/>
</dbReference>
<dbReference type="NCBIfam" id="TIGR01029">
    <property type="entry name" value="rpsG_bact"/>
    <property type="match status" value="1"/>
</dbReference>
<dbReference type="PANTHER" id="PTHR11205">
    <property type="entry name" value="RIBOSOMAL PROTEIN S7"/>
    <property type="match status" value="1"/>
</dbReference>
<dbReference type="Pfam" id="PF00177">
    <property type="entry name" value="Ribosomal_S7"/>
    <property type="match status" value="1"/>
</dbReference>
<dbReference type="PIRSF" id="PIRSF002122">
    <property type="entry name" value="RPS7p_RPS7a_RPS5e_RPS7o"/>
    <property type="match status" value="1"/>
</dbReference>
<dbReference type="SUPFAM" id="SSF47973">
    <property type="entry name" value="Ribosomal protein S7"/>
    <property type="match status" value="1"/>
</dbReference>
<dbReference type="PROSITE" id="PS00052">
    <property type="entry name" value="RIBOSOMAL_S7"/>
    <property type="match status" value="1"/>
</dbReference>
<geneLocation type="chloroplast"/>
<feature type="chain" id="PRO_0000124420" description="Small ribosomal subunit protein uS7cz/uS7cy">
    <location>
        <begin position="1"/>
        <end position="150"/>
    </location>
</feature>